<keyword id="KW-0238">DNA-binding</keyword>
<keyword id="KW-0479">Metal-binding</keyword>
<keyword id="KW-0539">Nucleus</keyword>
<keyword id="KW-1185">Reference proteome</keyword>
<keyword id="KW-0677">Repeat</keyword>
<keyword id="KW-0678">Repressor</keyword>
<keyword id="KW-0804">Transcription</keyword>
<keyword id="KW-0805">Transcription regulation</keyword>
<keyword id="KW-0832">Ubl conjugation</keyword>
<keyword id="KW-0862">Zinc</keyword>
<keyword id="KW-0863">Zinc-finger</keyword>
<reference key="1">
    <citation type="journal article" date="2008" name="PLoS Genet.">
        <title>Genomic islands in the pathogenic filamentous fungus Aspergillus fumigatus.</title>
        <authorList>
            <person name="Fedorova N.D."/>
            <person name="Khaldi N."/>
            <person name="Joardar V.S."/>
            <person name="Maiti R."/>
            <person name="Amedeo P."/>
            <person name="Anderson M.J."/>
            <person name="Crabtree J."/>
            <person name="Silva J.C."/>
            <person name="Badger J.H."/>
            <person name="Albarraq A."/>
            <person name="Angiuoli S."/>
            <person name="Bussey H."/>
            <person name="Bowyer P."/>
            <person name="Cotty P.J."/>
            <person name="Dyer P.S."/>
            <person name="Egan A."/>
            <person name="Galens K."/>
            <person name="Fraser-Liggett C.M."/>
            <person name="Haas B.J."/>
            <person name="Inman J.M."/>
            <person name="Kent R."/>
            <person name="Lemieux S."/>
            <person name="Malavazi I."/>
            <person name="Orvis J."/>
            <person name="Roemer T."/>
            <person name="Ronning C.M."/>
            <person name="Sundaram J.P."/>
            <person name="Sutton G."/>
            <person name="Turner G."/>
            <person name="Venter J.C."/>
            <person name="White O.R."/>
            <person name="Whitty B.R."/>
            <person name="Youngman P."/>
            <person name="Wolfe K.H."/>
            <person name="Goldman G.H."/>
            <person name="Wortman J.R."/>
            <person name="Jiang B."/>
            <person name="Denning D.W."/>
            <person name="Nierman W.C."/>
        </authorList>
    </citation>
    <scope>NUCLEOTIDE SEQUENCE [LARGE SCALE GENOMIC DNA]</scope>
    <source>
        <strain>ATCC 1007 / CBS 513.65 / DSM 816 / NCTC 3887 / NRRL 1 / QM 1276 / 107</strain>
    </source>
</reference>
<evidence type="ECO:0000250" key="1"/>
<evidence type="ECO:0000255" key="2">
    <source>
        <dbReference type="PROSITE-ProRule" id="PRU00042"/>
    </source>
</evidence>
<evidence type="ECO:0000256" key="3">
    <source>
        <dbReference type="SAM" id="MobiDB-lite"/>
    </source>
</evidence>
<evidence type="ECO:0000305" key="4"/>
<sequence>MPPSASSVGFSDLLNPQNPTESAPSTPVNKSPASSAPSSAQSNSTMASSVSLLPPLMKGTRPANEEPRQDLPRPYKCPLCDRAFHRLEHQTRHIRTHTGEKPHACQFPGCTKRFSRSDELTRHSRIHNNPNSRRNNKAQHLAAAAAAAANQDNVLVNNTGSMMPPPSKPITRSAPVSQVGSPDISPPHSFTNYAGHMRSNLGPYARNNERASSGMDINLLATAASQVERDEHFGFHNGPRGLPLFSSRLHNSSRLPSLSAYAISQNMTRSHSHDEEDVYSHRVKRSRPNSPNSTAPSSPTFSHDSLSPTPDHTPLATPAHSPRLRPLGTSELQLPSIRHLSLHHTPALAPMEPQPEGPNYYSPTQPHHGPSISDIMSKPDGTQRKLPVPQVPKVAVQDMLNPTGFVSVSSSTSNSVAGGDLAERF</sequence>
<organism>
    <name type="scientific">Aspergillus clavatus (strain ATCC 1007 / CBS 513.65 / DSM 816 / NCTC 3887 / NRRL 1 / QM 1276 / 107)</name>
    <dbReference type="NCBI Taxonomy" id="344612"/>
    <lineage>
        <taxon>Eukaryota</taxon>
        <taxon>Fungi</taxon>
        <taxon>Dikarya</taxon>
        <taxon>Ascomycota</taxon>
        <taxon>Pezizomycotina</taxon>
        <taxon>Eurotiomycetes</taxon>
        <taxon>Eurotiomycetidae</taxon>
        <taxon>Eurotiales</taxon>
        <taxon>Aspergillaceae</taxon>
        <taxon>Aspergillus</taxon>
        <taxon>Aspergillus subgen. Fumigati</taxon>
    </lineage>
</organism>
<comment type="function">
    <text evidence="1">Transcription regulator component of the regulatory network controlling carbon source utilization through ubiquitination and deubiquitination involving creA, creB, creC, creD and acrB. Represses the transcription of the alcR, alcA and aldA genes by binding to a GC-rich region in their promoter. Also plays a role in response to carbon starvation and the control of extracellular proteases activity (By similarity).</text>
</comment>
<comment type="subunit">
    <text evidence="1">Interacts with creB.</text>
</comment>
<comment type="subcellular location">
    <subcellularLocation>
        <location evidence="1">Nucleus</location>
    </subcellularLocation>
</comment>
<comment type="PTM">
    <text evidence="1">Ubiquitinated. Deubiquitinated by creB, probably to control its activity or amount (By similarity).</text>
</comment>
<comment type="similarity">
    <text evidence="4">Belongs to the creA/MIG C2H2-type zinc-finger protein family.</text>
</comment>
<accession>A1C6L9</accession>
<dbReference type="EMBL" id="DS027045">
    <property type="protein sequence ID" value="EAW14040.1"/>
    <property type="molecule type" value="Genomic_DNA"/>
</dbReference>
<dbReference type="RefSeq" id="XP_001275466.1">
    <property type="nucleotide sequence ID" value="XM_001275465.1"/>
</dbReference>
<dbReference type="SMR" id="A1C6L9"/>
<dbReference type="STRING" id="344612.A1C6L9"/>
<dbReference type="EnsemblFungi" id="EAW14040">
    <property type="protein sequence ID" value="EAW14040"/>
    <property type="gene ID" value="ACLA_070730"/>
</dbReference>
<dbReference type="GeneID" id="4708318"/>
<dbReference type="KEGG" id="act:ACLA_070730"/>
<dbReference type="VEuPathDB" id="FungiDB:ACLA_070730"/>
<dbReference type="eggNOG" id="KOG1721">
    <property type="taxonomic scope" value="Eukaryota"/>
</dbReference>
<dbReference type="HOGENOM" id="CLU_036230_0_0_1"/>
<dbReference type="OMA" id="YHMARSH"/>
<dbReference type="OrthoDB" id="654211at2759"/>
<dbReference type="Proteomes" id="UP000006701">
    <property type="component" value="Unassembled WGS sequence"/>
</dbReference>
<dbReference type="GO" id="GO:0005737">
    <property type="term" value="C:cytoplasm"/>
    <property type="evidence" value="ECO:0007669"/>
    <property type="project" value="TreeGrafter"/>
</dbReference>
<dbReference type="GO" id="GO:0005634">
    <property type="term" value="C:nucleus"/>
    <property type="evidence" value="ECO:0007669"/>
    <property type="project" value="UniProtKB-SubCell"/>
</dbReference>
<dbReference type="GO" id="GO:0000978">
    <property type="term" value="F:RNA polymerase II cis-regulatory region sequence-specific DNA binding"/>
    <property type="evidence" value="ECO:0007669"/>
    <property type="project" value="TreeGrafter"/>
</dbReference>
<dbReference type="GO" id="GO:0008270">
    <property type="term" value="F:zinc ion binding"/>
    <property type="evidence" value="ECO:0007669"/>
    <property type="project" value="UniProtKB-KW"/>
</dbReference>
<dbReference type="GO" id="GO:0000433">
    <property type="term" value="P:carbon catabolite repression of transcription from RNA polymerase II promoter by glucose"/>
    <property type="evidence" value="ECO:0007669"/>
    <property type="project" value="TreeGrafter"/>
</dbReference>
<dbReference type="FunFam" id="3.30.160.60:FF:000089">
    <property type="entry name" value="DNA-binding protein creA"/>
    <property type="match status" value="1"/>
</dbReference>
<dbReference type="FunFam" id="3.30.160.60:FF:000152">
    <property type="entry name" value="DNA-binding protein creA"/>
    <property type="match status" value="1"/>
</dbReference>
<dbReference type="Gene3D" id="3.30.160.60">
    <property type="entry name" value="Classic Zinc Finger"/>
    <property type="match status" value="2"/>
</dbReference>
<dbReference type="InterPro" id="IPR051007">
    <property type="entry name" value="creA/MIG_C2H2-ZnF"/>
</dbReference>
<dbReference type="InterPro" id="IPR036236">
    <property type="entry name" value="Znf_C2H2_sf"/>
</dbReference>
<dbReference type="InterPro" id="IPR013087">
    <property type="entry name" value="Znf_C2H2_type"/>
</dbReference>
<dbReference type="PANTHER" id="PTHR47428">
    <property type="entry name" value="REGULATORY PROTEIN MIG1-RELATED"/>
    <property type="match status" value="1"/>
</dbReference>
<dbReference type="PANTHER" id="PTHR47428:SF1">
    <property type="entry name" value="REGULATORY PROTEIN MIG1-RELATED"/>
    <property type="match status" value="1"/>
</dbReference>
<dbReference type="Pfam" id="PF00096">
    <property type="entry name" value="zf-C2H2"/>
    <property type="match status" value="2"/>
</dbReference>
<dbReference type="SMART" id="SM00355">
    <property type="entry name" value="ZnF_C2H2"/>
    <property type="match status" value="2"/>
</dbReference>
<dbReference type="SUPFAM" id="SSF57667">
    <property type="entry name" value="beta-beta-alpha zinc fingers"/>
    <property type="match status" value="1"/>
</dbReference>
<dbReference type="PROSITE" id="PS00028">
    <property type="entry name" value="ZINC_FINGER_C2H2_1"/>
    <property type="match status" value="2"/>
</dbReference>
<dbReference type="PROSITE" id="PS50157">
    <property type="entry name" value="ZINC_FINGER_C2H2_2"/>
    <property type="match status" value="2"/>
</dbReference>
<protein>
    <recommendedName>
        <fullName>Probable DNA-binding protein creA</fullName>
    </recommendedName>
    <alternativeName>
        <fullName>Carbon catabolite repressor A</fullName>
    </alternativeName>
</protein>
<feature type="chain" id="PRO_0000395720" description="Probable DNA-binding protein creA">
    <location>
        <begin position="1"/>
        <end position="425"/>
    </location>
</feature>
<feature type="zinc finger region" description="C2H2-type 1" evidence="2">
    <location>
        <begin position="75"/>
        <end position="97"/>
    </location>
</feature>
<feature type="zinc finger region" description="C2H2-type 2" evidence="2">
    <location>
        <begin position="103"/>
        <end position="127"/>
    </location>
</feature>
<feature type="region of interest" description="Disordered" evidence="3">
    <location>
        <begin position="1"/>
        <end position="76"/>
    </location>
</feature>
<feature type="region of interest" description="Disordered" evidence="3">
    <location>
        <begin position="116"/>
        <end position="135"/>
    </location>
</feature>
<feature type="region of interest" description="Disordered" evidence="3">
    <location>
        <begin position="266"/>
        <end position="327"/>
    </location>
</feature>
<feature type="region of interest" description="Disordered" evidence="3">
    <location>
        <begin position="347"/>
        <end position="386"/>
    </location>
</feature>
<feature type="region of interest" description="Disordered" evidence="3">
    <location>
        <begin position="405"/>
        <end position="425"/>
    </location>
</feature>
<feature type="compositionally biased region" description="Polar residues" evidence="3">
    <location>
        <begin position="1"/>
        <end position="29"/>
    </location>
</feature>
<feature type="compositionally biased region" description="Low complexity" evidence="3">
    <location>
        <begin position="31"/>
        <end position="51"/>
    </location>
</feature>
<feature type="compositionally biased region" description="Basic and acidic residues" evidence="3">
    <location>
        <begin position="63"/>
        <end position="73"/>
    </location>
</feature>
<feature type="compositionally biased region" description="Basic and acidic residues" evidence="3">
    <location>
        <begin position="271"/>
        <end position="280"/>
    </location>
</feature>
<feature type="compositionally biased region" description="Low complexity" evidence="3">
    <location>
        <begin position="288"/>
        <end position="302"/>
    </location>
</feature>
<feature type="compositionally biased region" description="Low complexity" evidence="3">
    <location>
        <begin position="406"/>
        <end position="416"/>
    </location>
</feature>
<gene>
    <name type="primary">creA</name>
    <name type="ORF">ACLA_070730</name>
</gene>
<name>CREA_ASPCL</name>
<proteinExistence type="inferred from homology"/>